<comment type="function">
    <text evidence="1">Allows the formation of correctly charged Asn-tRNA(Asn) or Gln-tRNA(Gln) through the transamidation of misacylated Asp-tRNA(Asn) or Glu-tRNA(Gln) in organisms which lack either or both of asparaginyl-tRNA or glutaminyl-tRNA synthetases. The reaction takes place in the presence of glutamine and ATP through an activated phospho-Asp-tRNA(Asn) or phospho-Glu-tRNA(Gln).</text>
</comment>
<comment type="catalytic activity">
    <reaction evidence="1">
        <text>L-glutamyl-tRNA(Gln) + L-glutamine + ATP + H2O = L-glutaminyl-tRNA(Gln) + L-glutamate + ADP + phosphate + H(+)</text>
        <dbReference type="Rhea" id="RHEA:17521"/>
        <dbReference type="Rhea" id="RHEA-COMP:9681"/>
        <dbReference type="Rhea" id="RHEA-COMP:9684"/>
        <dbReference type="ChEBI" id="CHEBI:15377"/>
        <dbReference type="ChEBI" id="CHEBI:15378"/>
        <dbReference type="ChEBI" id="CHEBI:29985"/>
        <dbReference type="ChEBI" id="CHEBI:30616"/>
        <dbReference type="ChEBI" id="CHEBI:43474"/>
        <dbReference type="ChEBI" id="CHEBI:58359"/>
        <dbReference type="ChEBI" id="CHEBI:78520"/>
        <dbReference type="ChEBI" id="CHEBI:78521"/>
        <dbReference type="ChEBI" id="CHEBI:456216"/>
    </reaction>
</comment>
<comment type="catalytic activity">
    <reaction evidence="1">
        <text>L-aspartyl-tRNA(Asn) + L-glutamine + ATP + H2O = L-asparaginyl-tRNA(Asn) + L-glutamate + ADP + phosphate + 2 H(+)</text>
        <dbReference type="Rhea" id="RHEA:14513"/>
        <dbReference type="Rhea" id="RHEA-COMP:9674"/>
        <dbReference type="Rhea" id="RHEA-COMP:9677"/>
        <dbReference type="ChEBI" id="CHEBI:15377"/>
        <dbReference type="ChEBI" id="CHEBI:15378"/>
        <dbReference type="ChEBI" id="CHEBI:29985"/>
        <dbReference type="ChEBI" id="CHEBI:30616"/>
        <dbReference type="ChEBI" id="CHEBI:43474"/>
        <dbReference type="ChEBI" id="CHEBI:58359"/>
        <dbReference type="ChEBI" id="CHEBI:78515"/>
        <dbReference type="ChEBI" id="CHEBI:78516"/>
        <dbReference type="ChEBI" id="CHEBI:456216"/>
    </reaction>
</comment>
<comment type="subunit">
    <text evidence="1">Heterotrimer of A, B and C subunits.</text>
</comment>
<comment type="similarity">
    <text evidence="1">Belongs to the GatB/GatE family. GatB subfamily.</text>
</comment>
<reference key="1">
    <citation type="journal article" date="2010" name="Appl. Environ. Microbiol.">
        <title>The genome sequence of Psychrobacter arcticus 273-4, a psychroactive Siberian permafrost bacterium, reveals mechanisms for adaptation to low-temperature growth.</title>
        <authorList>
            <person name="Ayala-del-Rio H.L."/>
            <person name="Chain P.S."/>
            <person name="Grzymski J.J."/>
            <person name="Ponder M.A."/>
            <person name="Ivanova N."/>
            <person name="Bergholz P.W."/>
            <person name="Di Bartolo G."/>
            <person name="Hauser L."/>
            <person name="Land M."/>
            <person name="Bakermans C."/>
            <person name="Rodrigues D."/>
            <person name="Klappenbach J."/>
            <person name="Zarka D."/>
            <person name="Larimer F."/>
            <person name="Richardson P."/>
            <person name="Murray A."/>
            <person name="Thomashow M."/>
            <person name="Tiedje J.M."/>
        </authorList>
    </citation>
    <scope>NUCLEOTIDE SEQUENCE [LARGE SCALE GENOMIC DNA]</scope>
    <source>
        <strain>DSM 17307 / VKM B-2377 / 273-4</strain>
    </source>
</reference>
<keyword id="KW-0067">ATP-binding</keyword>
<keyword id="KW-0436">Ligase</keyword>
<keyword id="KW-0547">Nucleotide-binding</keyword>
<keyword id="KW-0648">Protein biosynthesis</keyword>
<keyword id="KW-1185">Reference proteome</keyword>
<dbReference type="EC" id="6.3.5.-" evidence="1"/>
<dbReference type="EMBL" id="CP000082">
    <property type="protein sequence ID" value="AAZ18343.1"/>
    <property type="molecule type" value="Genomic_DNA"/>
</dbReference>
<dbReference type="RefSeq" id="WP_011279779.1">
    <property type="nucleotide sequence ID" value="NC_007204.1"/>
</dbReference>
<dbReference type="SMR" id="Q4FUG5"/>
<dbReference type="STRING" id="259536.Psyc_0480"/>
<dbReference type="KEGG" id="par:Psyc_0480"/>
<dbReference type="eggNOG" id="COG0064">
    <property type="taxonomic scope" value="Bacteria"/>
</dbReference>
<dbReference type="HOGENOM" id="CLU_019240_0_0_6"/>
<dbReference type="OrthoDB" id="9804078at2"/>
<dbReference type="Proteomes" id="UP000000546">
    <property type="component" value="Chromosome"/>
</dbReference>
<dbReference type="GO" id="GO:0050566">
    <property type="term" value="F:asparaginyl-tRNA synthase (glutamine-hydrolyzing) activity"/>
    <property type="evidence" value="ECO:0007669"/>
    <property type="project" value="RHEA"/>
</dbReference>
<dbReference type="GO" id="GO:0005524">
    <property type="term" value="F:ATP binding"/>
    <property type="evidence" value="ECO:0007669"/>
    <property type="project" value="UniProtKB-KW"/>
</dbReference>
<dbReference type="GO" id="GO:0050567">
    <property type="term" value="F:glutaminyl-tRNA synthase (glutamine-hydrolyzing) activity"/>
    <property type="evidence" value="ECO:0007669"/>
    <property type="project" value="UniProtKB-UniRule"/>
</dbReference>
<dbReference type="GO" id="GO:0070681">
    <property type="term" value="P:glutaminyl-tRNAGln biosynthesis via transamidation"/>
    <property type="evidence" value="ECO:0007669"/>
    <property type="project" value="TreeGrafter"/>
</dbReference>
<dbReference type="GO" id="GO:0006412">
    <property type="term" value="P:translation"/>
    <property type="evidence" value="ECO:0007669"/>
    <property type="project" value="UniProtKB-UniRule"/>
</dbReference>
<dbReference type="FunFam" id="1.10.10.410:FF:000001">
    <property type="entry name" value="Aspartyl/glutamyl-tRNA(Asn/Gln) amidotransferase subunit B"/>
    <property type="match status" value="1"/>
</dbReference>
<dbReference type="FunFam" id="1.10.150.380:FF:000001">
    <property type="entry name" value="Aspartyl/glutamyl-tRNA(Asn/Gln) amidotransferase subunit B"/>
    <property type="match status" value="1"/>
</dbReference>
<dbReference type="Gene3D" id="1.10.10.410">
    <property type="match status" value="1"/>
</dbReference>
<dbReference type="Gene3D" id="1.10.150.380">
    <property type="entry name" value="GatB domain, N-terminal subdomain"/>
    <property type="match status" value="1"/>
</dbReference>
<dbReference type="HAMAP" id="MF_00121">
    <property type="entry name" value="GatB"/>
    <property type="match status" value="1"/>
</dbReference>
<dbReference type="InterPro" id="IPR017959">
    <property type="entry name" value="Asn/Gln-tRNA_amidoTrfase_suB/E"/>
</dbReference>
<dbReference type="InterPro" id="IPR006075">
    <property type="entry name" value="Asn/Gln-tRNA_Trfase_suB/E_cat"/>
</dbReference>
<dbReference type="InterPro" id="IPR018027">
    <property type="entry name" value="Asn/Gln_amidotransferase"/>
</dbReference>
<dbReference type="InterPro" id="IPR003789">
    <property type="entry name" value="Asn/Gln_tRNA_amidoTrase-B-like"/>
</dbReference>
<dbReference type="InterPro" id="IPR004413">
    <property type="entry name" value="GatB"/>
</dbReference>
<dbReference type="InterPro" id="IPR042114">
    <property type="entry name" value="GatB_C_1"/>
</dbReference>
<dbReference type="InterPro" id="IPR023168">
    <property type="entry name" value="GatB_Yqey_C_2"/>
</dbReference>
<dbReference type="InterPro" id="IPR017958">
    <property type="entry name" value="Gln-tRNA_amidoTrfase_suB_CS"/>
</dbReference>
<dbReference type="InterPro" id="IPR014746">
    <property type="entry name" value="Gln_synth/guanido_kin_cat_dom"/>
</dbReference>
<dbReference type="NCBIfam" id="TIGR00133">
    <property type="entry name" value="gatB"/>
    <property type="match status" value="1"/>
</dbReference>
<dbReference type="NCBIfam" id="NF004012">
    <property type="entry name" value="PRK05477.1-2"/>
    <property type="match status" value="1"/>
</dbReference>
<dbReference type="NCBIfam" id="NF004014">
    <property type="entry name" value="PRK05477.1-4"/>
    <property type="match status" value="1"/>
</dbReference>
<dbReference type="NCBIfam" id="NF004015">
    <property type="entry name" value="PRK05477.1-5"/>
    <property type="match status" value="1"/>
</dbReference>
<dbReference type="PANTHER" id="PTHR11659">
    <property type="entry name" value="GLUTAMYL-TRNA GLN AMIDOTRANSFERASE SUBUNIT B MITOCHONDRIAL AND PROKARYOTIC PET112-RELATED"/>
    <property type="match status" value="1"/>
</dbReference>
<dbReference type="PANTHER" id="PTHR11659:SF0">
    <property type="entry name" value="GLUTAMYL-TRNA(GLN) AMIDOTRANSFERASE SUBUNIT B, MITOCHONDRIAL"/>
    <property type="match status" value="1"/>
</dbReference>
<dbReference type="Pfam" id="PF02934">
    <property type="entry name" value="GatB_N"/>
    <property type="match status" value="1"/>
</dbReference>
<dbReference type="Pfam" id="PF02637">
    <property type="entry name" value="GatB_Yqey"/>
    <property type="match status" value="1"/>
</dbReference>
<dbReference type="SMART" id="SM00845">
    <property type="entry name" value="GatB_Yqey"/>
    <property type="match status" value="1"/>
</dbReference>
<dbReference type="SUPFAM" id="SSF89095">
    <property type="entry name" value="GatB/YqeY motif"/>
    <property type="match status" value="1"/>
</dbReference>
<dbReference type="SUPFAM" id="SSF55931">
    <property type="entry name" value="Glutamine synthetase/guanido kinase"/>
    <property type="match status" value="1"/>
</dbReference>
<dbReference type="PROSITE" id="PS01234">
    <property type="entry name" value="GATB"/>
    <property type="match status" value="1"/>
</dbReference>
<accession>Q4FUG5</accession>
<evidence type="ECO:0000255" key="1">
    <source>
        <dbReference type="HAMAP-Rule" id="MF_00121"/>
    </source>
</evidence>
<name>GATB_PSYA2</name>
<proteinExistence type="inferred from homology"/>
<feature type="chain" id="PRO_0000241261" description="Aspartyl/glutamyl-tRNA(Asn/Gln) amidotransferase subunit B">
    <location>
        <begin position="1"/>
        <end position="509"/>
    </location>
</feature>
<protein>
    <recommendedName>
        <fullName evidence="1">Aspartyl/glutamyl-tRNA(Asn/Gln) amidotransferase subunit B</fullName>
        <shortName evidence="1">Asp/Glu-ADT subunit B</shortName>
        <ecNumber evidence="1">6.3.5.-</ecNumber>
    </recommendedName>
</protein>
<organism>
    <name type="scientific">Psychrobacter arcticus (strain DSM 17307 / VKM B-2377 / 273-4)</name>
    <dbReference type="NCBI Taxonomy" id="259536"/>
    <lineage>
        <taxon>Bacteria</taxon>
        <taxon>Pseudomonadati</taxon>
        <taxon>Pseudomonadota</taxon>
        <taxon>Gammaproteobacteria</taxon>
        <taxon>Moraxellales</taxon>
        <taxon>Moraxellaceae</taxon>
        <taxon>Psychrobacter</taxon>
    </lineage>
</organism>
<sequence>MNTAPTTDNNAVRKHDVRPELFVDGYEVVIGIEIHCQLNTESKIFSSAPTDFGHEPNTQASIVDLGLPGVLPVLNAGVVDRALKFGIGVNAELGLFNTFDRKNYFYPDLPKGYQITQMANPIVGEGYIDVVVNEGEKNEYPKRMGITRAHLEEDAGKSVHDAVDGMTGVDLNRAGTPLIEIVSEPDMRSAHEALAYIKAIHQLVTWLGISDAIMAEGSFRCDCNVSIRKPGAELGTRTELKNLNSFRFIERAINREIERQIDILEDGGKVVQATMLYDPERDETRVMRTKEDANDYRYFPDPDLLPVRIEQLTVDSIRAAMPELPVARRARFEEALGLSEYDARILTGSRQIADYFEDVVAEIDQQDAKMAANWVMGDLLGALNKDDKDIIDSPISAKQLAGMLARIKDDTLSGKLAKKVFGALYERAGGDADDAADKIIEEKGLKQETDTGAIKAIVEEVIAKNTAMVEEYRGGKEKAFNGLVGQVMKASRGSANPQQVNQILKELLD</sequence>
<gene>
    <name evidence="1" type="primary">gatB</name>
    <name type="ordered locus">Psyc_0480</name>
</gene>